<organism>
    <name type="scientific">Fusobacterium nucleatum subsp. nucleatum (strain ATCC 25586 / DSM 15643 / BCRC 10681 / CIP 101130 / JCM 8532 / KCTC 2640 / LMG 13131 / VPI 4355)</name>
    <dbReference type="NCBI Taxonomy" id="190304"/>
    <lineage>
        <taxon>Bacteria</taxon>
        <taxon>Fusobacteriati</taxon>
        <taxon>Fusobacteriota</taxon>
        <taxon>Fusobacteriia</taxon>
        <taxon>Fusobacteriales</taxon>
        <taxon>Fusobacteriaceae</taxon>
        <taxon>Fusobacterium</taxon>
    </lineage>
</organism>
<dbReference type="EC" id="2.1.1.-" evidence="1"/>
<dbReference type="EMBL" id="AE009951">
    <property type="protein sequence ID" value="AAL93837.1"/>
    <property type="molecule type" value="Genomic_DNA"/>
</dbReference>
<dbReference type="RefSeq" id="NP_602538.1">
    <property type="nucleotide sequence ID" value="NC_003454.1"/>
</dbReference>
<dbReference type="RefSeq" id="WP_011015789.1">
    <property type="nucleotide sequence ID" value="NZ_OZ209243.1"/>
</dbReference>
<dbReference type="SMR" id="Q8RI89"/>
<dbReference type="FunCoup" id="Q8RI89">
    <property type="interactions" value="317"/>
</dbReference>
<dbReference type="STRING" id="190304.FN1722"/>
<dbReference type="PaxDb" id="190304-FN1722"/>
<dbReference type="EnsemblBacteria" id="AAL93837">
    <property type="protein sequence ID" value="AAL93837"/>
    <property type="gene ID" value="FN1722"/>
</dbReference>
<dbReference type="GeneID" id="79782654"/>
<dbReference type="KEGG" id="fnu:FN1722"/>
<dbReference type="PATRIC" id="fig|190304.8.peg.211"/>
<dbReference type="eggNOG" id="COG0357">
    <property type="taxonomic scope" value="Bacteria"/>
</dbReference>
<dbReference type="HOGENOM" id="CLU_065341_0_1_0"/>
<dbReference type="InParanoid" id="Q8RI89"/>
<dbReference type="BioCyc" id="FNUC190304:G1FZS-222-MONOMER"/>
<dbReference type="Proteomes" id="UP000002521">
    <property type="component" value="Chromosome"/>
</dbReference>
<dbReference type="GO" id="GO:0005829">
    <property type="term" value="C:cytosol"/>
    <property type="evidence" value="ECO:0000318"/>
    <property type="project" value="GO_Central"/>
</dbReference>
<dbReference type="GO" id="GO:0070043">
    <property type="term" value="F:rRNA (guanine-N7-)-methyltransferase activity"/>
    <property type="evidence" value="ECO:0000318"/>
    <property type="project" value="GO_Central"/>
</dbReference>
<dbReference type="CDD" id="cd02440">
    <property type="entry name" value="AdoMet_MTases"/>
    <property type="match status" value="1"/>
</dbReference>
<dbReference type="FunFam" id="3.40.50.150:FF:000041">
    <property type="entry name" value="Ribosomal RNA small subunit methyltransferase G"/>
    <property type="match status" value="1"/>
</dbReference>
<dbReference type="Gene3D" id="3.40.50.150">
    <property type="entry name" value="Vaccinia Virus protein VP39"/>
    <property type="match status" value="1"/>
</dbReference>
<dbReference type="HAMAP" id="MF_00074">
    <property type="entry name" value="16SrRNA_methyltr_G"/>
    <property type="match status" value="1"/>
</dbReference>
<dbReference type="InterPro" id="IPR003682">
    <property type="entry name" value="rRNA_ssu_MeTfrase_G"/>
</dbReference>
<dbReference type="InterPro" id="IPR029063">
    <property type="entry name" value="SAM-dependent_MTases_sf"/>
</dbReference>
<dbReference type="NCBIfam" id="TIGR00138">
    <property type="entry name" value="rsmG_gidB"/>
    <property type="match status" value="1"/>
</dbReference>
<dbReference type="PANTHER" id="PTHR31760">
    <property type="entry name" value="S-ADENOSYL-L-METHIONINE-DEPENDENT METHYLTRANSFERASES SUPERFAMILY PROTEIN"/>
    <property type="match status" value="1"/>
</dbReference>
<dbReference type="PANTHER" id="PTHR31760:SF0">
    <property type="entry name" value="S-ADENOSYL-L-METHIONINE-DEPENDENT METHYLTRANSFERASES SUPERFAMILY PROTEIN"/>
    <property type="match status" value="1"/>
</dbReference>
<dbReference type="Pfam" id="PF02527">
    <property type="entry name" value="GidB"/>
    <property type="match status" value="1"/>
</dbReference>
<dbReference type="PIRSF" id="PIRSF003078">
    <property type="entry name" value="GidB"/>
    <property type="match status" value="1"/>
</dbReference>
<dbReference type="SUPFAM" id="SSF53335">
    <property type="entry name" value="S-adenosyl-L-methionine-dependent methyltransferases"/>
    <property type="match status" value="1"/>
</dbReference>
<comment type="function">
    <text evidence="1">Specifically methylates the N7 position of a guanine in 16S rRNA.</text>
</comment>
<comment type="subcellular location">
    <subcellularLocation>
        <location evidence="1">Cytoplasm</location>
    </subcellularLocation>
</comment>
<comment type="similarity">
    <text evidence="1">Belongs to the methyltransferase superfamily. RNA methyltransferase RsmG family.</text>
</comment>
<sequence length="232" mass="26885">MKDYFKEGLEKIKVSYDENKMEKSLKYLEILLDYNSHTNLTAIREEKAIIEKHFLDSLLLQNLLKDEDKTLIDIGTGAGFPGMILAIFNEDKKFTLLDSVRKKTDFLELVKNELALNNVEVINGRAEEIIKDRREKYDVGLCRGVSNLSVILEYEIPFLKVNGRFLPQKMIGTDEIKNSSNALKILNSKILKEYEFKLPFSNEDRLVIEILKTKKTDEKYPRKIGIPLKKPL</sequence>
<proteinExistence type="inferred from homology"/>
<keyword id="KW-0963">Cytoplasm</keyword>
<keyword id="KW-0489">Methyltransferase</keyword>
<keyword id="KW-1185">Reference proteome</keyword>
<keyword id="KW-0698">rRNA processing</keyword>
<keyword id="KW-0949">S-adenosyl-L-methionine</keyword>
<keyword id="KW-0808">Transferase</keyword>
<reference key="1">
    <citation type="journal article" date="2002" name="J. Bacteriol.">
        <title>Genome sequence and analysis of the oral bacterium Fusobacterium nucleatum strain ATCC 25586.</title>
        <authorList>
            <person name="Kapatral V."/>
            <person name="Anderson I."/>
            <person name="Ivanova N."/>
            <person name="Reznik G."/>
            <person name="Los T."/>
            <person name="Lykidis A."/>
            <person name="Bhattacharyya A."/>
            <person name="Bartman A."/>
            <person name="Gardner W."/>
            <person name="Grechkin G."/>
            <person name="Zhu L."/>
            <person name="Vasieva O."/>
            <person name="Chu L."/>
            <person name="Kogan Y."/>
            <person name="Chaga O."/>
            <person name="Goltsman E."/>
            <person name="Bernal A."/>
            <person name="Larsen N."/>
            <person name="D'Souza M."/>
            <person name="Walunas T."/>
            <person name="Pusch G."/>
            <person name="Haselkorn R."/>
            <person name="Fonstein M."/>
            <person name="Kyrpides N.C."/>
            <person name="Overbeek R."/>
        </authorList>
    </citation>
    <scope>NUCLEOTIDE SEQUENCE [LARGE SCALE GENOMIC DNA]</scope>
    <source>
        <strain>ATCC 25586 / DSM 15643 / BCRC 10681 / CIP 101130 / JCM 8532 / KCTC 2640 / LMG 13131 / VPI 4355</strain>
    </source>
</reference>
<name>RSMG_FUSNN</name>
<accession>Q8RI89</accession>
<gene>
    <name evidence="1" type="primary">rsmG</name>
    <name type="ordered locus">FN1722</name>
</gene>
<protein>
    <recommendedName>
        <fullName evidence="1">Ribosomal RNA small subunit methyltransferase G</fullName>
        <ecNumber evidence="1">2.1.1.-</ecNumber>
    </recommendedName>
    <alternativeName>
        <fullName evidence="1">16S rRNA 7-methylguanosine methyltransferase</fullName>
        <shortName evidence="1">16S rRNA m7G methyltransferase</shortName>
    </alternativeName>
</protein>
<feature type="chain" id="PRO_0000184253" description="Ribosomal RNA small subunit methyltransferase G">
    <location>
        <begin position="1"/>
        <end position="232"/>
    </location>
</feature>
<feature type="binding site" evidence="1">
    <location>
        <position position="75"/>
    </location>
    <ligand>
        <name>S-adenosyl-L-methionine</name>
        <dbReference type="ChEBI" id="CHEBI:59789"/>
    </ligand>
</feature>
<feature type="binding site" evidence="1">
    <location>
        <position position="80"/>
    </location>
    <ligand>
        <name>S-adenosyl-L-methionine</name>
        <dbReference type="ChEBI" id="CHEBI:59789"/>
    </ligand>
</feature>
<feature type="binding site" evidence="1">
    <location>
        <begin position="126"/>
        <end position="127"/>
    </location>
    <ligand>
        <name>S-adenosyl-L-methionine</name>
        <dbReference type="ChEBI" id="CHEBI:59789"/>
    </ligand>
</feature>
<feature type="binding site" evidence="1">
    <location>
        <position position="143"/>
    </location>
    <ligand>
        <name>S-adenosyl-L-methionine</name>
        <dbReference type="ChEBI" id="CHEBI:59789"/>
    </ligand>
</feature>
<evidence type="ECO:0000255" key="1">
    <source>
        <dbReference type="HAMAP-Rule" id="MF_00074"/>
    </source>
</evidence>